<protein>
    <recommendedName>
        <fullName evidence="10">AT-hook motif nuclear-localized protein 9</fullName>
    </recommendedName>
</protein>
<dbReference type="EMBL" id="AC004665">
    <property type="protein sequence ID" value="AAC28539.1"/>
    <property type="molecule type" value="Genomic_DNA"/>
</dbReference>
<dbReference type="EMBL" id="CP002685">
    <property type="protein sequence ID" value="AEC10609.1"/>
    <property type="molecule type" value="Genomic_DNA"/>
</dbReference>
<dbReference type="EMBL" id="CP002685">
    <property type="protein sequence ID" value="AEC10610.1"/>
    <property type="molecule type" value="Genomic_DNA"/>
</dbReference>
<dbReference type="EMBL" id="AF367271">
    <property type="protein sequence ID" value="AAK56260.1"/>
    <property type="molecule type" value="mRNA"/>
</dbReference>
<dbReference type="EMBL" id="AY059157">
    <property type="protein sequence ID" value="AAL15382.1"/>
    <property type="molecule type" value="mRNA"/>
</dbReference>
<dbReference type="EMBL" id="AY062699">
    <property type="protein sequence ID" value="AAL32777.1"/>
    <property type="molecule type" value="mRNA"/>
</dbReference>
<dbReference type="EMBL" id="AY114678">
    <property type="protein sequence ID" value="AAM47997.1"/>
    <property type="molecule type" value="mRNA"/>
</dbReference>
<dbReference type="EMBL" id="BR000345">
    <property type="protein sequence ID" value="FAA00280.1"/>
    <property type="molecule type" value="mRNA"/>
</dbReference>
<dbReference type="PIR" id="T02462">
    <property type="entry name" value="T02462"/>
</dbReference>
<dbReference type="RefSeq" id="NP_182109.1">
    <property type="nucleotide sequence ID" value="NM_130148.3"/>
</dbReference>
<dbReference type="RefSeq" id="NP_850442.1">
    <property type="nucleotide sequence ID" value="NM_180111.2"/>
</dbReference>
<dbReference type="SMR" id="O80834"/>
<dbReference type="FunCoup" id="O80834">
    <property type="interactions" value="52"/>
</dbReference>
<dbReference type="IntAct" id="O80834">
    <property type="interactions" value="7"/>
</dbReference>
<dbReference type="STRING" id="3702.O80834"/>
<dbReference type="iPTMnet" id="O80834"/>
<dbReference type="PaxDb" id="3702-AT2G45850.1"/>
<dbReference type="ProteomicsDB" id="244802"/>
<dbReference type="EnsemblPlants" id="AT2G45850.1">
    <property type="protein sequence ID" value="AT2G45850.1"/>
    <property type="gene ID" value="AT2G45850"/>
</dbReference>
<dbReference type="EnsemblPlants" id="AT2G45850.2">
    <property type="protein sequence ID" value="AT2G45850.2"/>
    <property type="gene ID" value="AT2G45850"/>
</dbReference>
<dbReference type="GeneID" id="819193"/>
<dbReference type="Gramene" id="AT2G45850.1">
    <property type="protein sequence ID" value="AT2G45850.1"/>
    <property type="gene ID" value="AT2G45850"/>
</dbReference>
<dbReference type="Gramene" id="AT2G45850.2">
    <property type="protein sequence ID" value="AT2G45850.2"/>
    <property type="gene ID" value="AT2G45850"/>
</dbReference>
<dbReference type="KEGG" id="ath:AT2G45850"/>
<dbReference type="Araport" id="AT2G45850"/>
<dbReference type="TAIR" id="AT2G45850">
    <property type="gene designation" value="AHL9"/>
</dbReference>
<dbReference type="eggNOG" id="ENOG502QTYW">
    <property type="taxonomic scope" value="Eukaryota"/>
</dbReference>
<dbReference type="HOGENOM" id="CLU_039808_0_2_1"/>
<dbReference type="InParanoid" id="O80834"/>
<dbReference type="OrthoDB" id="688543at2759"/>
<dbReference type="PhylomeDB" id="O80834"/>
<dbReference type="PRO" id="PR:O80834"/>
<dbReference type="Proteomes" id="UP000006548">
    <property type="component" value="Chromosome 2"/>
</dbReference>
<dbReference type="ExpressionAtlas" id="O80834">
    <property type="expression patterns" value="baseline and differential"/>
</dbReference>
<dbReference type="GO" id="GO:0005634">
    <property type="term" value="C:nucleus"/>
    <property type="evidence" value="ECO:0007005"/>
    <property type="project" value="TAIR"/>
</dbReference>
<dbReference type="GO" id="GO:0003680">
    <property type="term" value="F:minor groove of adenine-thymine-rich DNA binding"/>
    <property type="evidence" value="ECO:0007669"/>
    <property type="project" value="InterPro"/>
</dbReference>
<dbReference type="CDD" id="cd11378">
    <property type="entry name" value="DUF296"/>
    <property type="match status" value="1"/>
</dbReference>
<dbReference type="FunFam" id="3.30.1330.80:FF:000003">
    <property type="entry name" value="AT-hook motif nuclear-localized protein 1-like"/>
    <property type="match status" value="1"/>
</dbReference>
<dbReference type="Gene3D" id="3.30.1330.80">
    <property type="entry name" value="Hypothetical protein, similar to alpha- acetolactate decarboxylase, domain 2"/>
    <property type="match status" value="1"/>
</dbReference>
<dbReference type="InterPro" id="IPR039605">
    <property type="entry name" value="AHL"/>
</dbReference>
<dbReference type="InterPro" id="IPR017956">
    <property type="entry name" value="AT_hook_DNA-bd_motif"/>
</dbReference>
<dbReference type="InterPro" id="IPR005175">
    <property type="entry name" value="PPC_dom"/>
</dbReference>
<dbReference type="PANTHER" id="PTHR31500">
    <property type="entry name" value="AT-HOOK MOTIF NUCLEAR-LOCALIZED PROTEIN 9"/>
    <property type="match status" value="1"/>
</dbReference>
<dbReference type="PANTHER" id="PTHR31500:SF9">
    <property type="entry name" value="AT-HOOK MOTIF NUCLEAR-LOCALIZED PROTEIN 9"/>
    <property type="match status" value="1"/>
</dbReference>
<dbReference type="Pfam" id="PF03479">
    <property type="entry name" value="PCC"/>
    <property type="match status" value="1"/>
</dbReference>
<dbReference type="SMART" id="SM00384">
    <property type="entry name" value="AT_hook"/>
    <property type="match status" value="2"/>
</dbReference>
<dbReference type="SUPFAM" id="SSF117856">
    <property type="entry name" value="AF0104/ALDC/Ptd012-like"/>
    <property type="match status" value="1"/>
</dbReference>
<dbReference type="PROSITE" id="PS51742">
    <property type="entry name" value="PPC"/>
    <property type="match status" value="1"/>
</dbReference>
<comment type="function">
    <text evidence="1">Transcription factor that specifically binds AT-rich DNA sequences related to the nuclear matrix attachment regions (MARs).</text>
</comment>
<comment type="subcellular location">
    <subcellularLocation>
        <location evidence="1">Nucleus</location>
    </subcellularLocation>
</comment>
<comment type="domain">
    <text evidence="5">The PPC domain mediates interactions between AHL proteins.</text>
</comment>
<evidence type="ECO:0000250" key="1">
    <source>
        <dbReference type="UniProtKB" id="Q8VYJ2"/>
    </source>
</evidence>
<evidence type="ECO:0000255" key="2"/>
<evidence type="ECO:0000255" key="3">
    <source>
        <dbReference type="PROSITE-ProRule" id="PRU01078"/>
    </source>
</evidence>
<evidence type="ECO:0000256" key="4">
    <source>
        <dbReference type="SAM" id="MobiDB-lite"/>
    </source>
</evidence>
<evidence type="ECO:0000269" key="5">
    <source>
    </source>
</evidence>
<evidence type="ECO:0000303" key="6">
    <source>
    </source>
</evidence>
<evidence type="ECO:0000305" key="7"/>
<evidence type="ECO:0000312" key="8">
    <source>
        <dbReference type="Araport" id="AT2G45850"/>
    </source>
</evidence>
<evidence type="ECO:0000312" key="9">
    <source>
        <dbReference type="EMBL" id="AAC28539.1"/>
    </source>
</evidence>
<evidence type="ECO:0000312" key="10">
    <source>
        <dbReference type="EMBL" id="FAA00280.1"/>
    </source>
</evidence>
<keyword id="KW-0238">DNA-binding</keyword>
<keyword id="KW-0539">Nucleus</keyword>
<keyword id="KW-1185">Reference proteome</keyword>
<keyword id="KW-0677">Repeat</keyword>
<keyword id="KW-0804">Transcription</keyword>
<keyword id="KW-0805">Transcription regulation</keyword>
<feature type="chain" id="PRO_0000432027" description="AT-hook motif nuclear-localized protein 9">
    <location>
        <begin position="1"/>
        <end position="348"/>
    </location>
</feature>
<feature type="domain" description="PPC" evidence="3">
    <location>
        <begin position="157"/>
        <end position="299"/>
    </location>
</feature>
<feature type="DNA-binding region" description="A.T hook 1" evidence="2">
    <location>
        <begin position="98"/>
        <end position="110"/>
    </location>
</feature>
<feature type="DNA-binding region" description="A.T hook 2" evidence="2">
    <location>
        <begin position="132"/>
        <end position="144"/>
    </location>
</feature>
<feature type="region of interest" description="Disordered" evidence="4">
    <location>
        <begin position="18"/>
        <end position="156"/>
    </location>
</feature>
<feature type="short sequence motif" description="Bipartite nuclear localization signal" evidence="7">
    <location>
        <begin position="98"/>
        <end position="106"/>
    </location>
</feature>
<feature type="compositionally biased region" description="Polar residues" evidence="4">
    <location>
        <begin position="31"/>
        <end position="46"/>
    </location>
</feature>
<feature type="compositionally biased region" description="Low complexity" evidence="4">
    <location>
        <begin position="47"/>
        <end position="60"/>
    </location>
</feature>
<feature type="compositionally biased region" description="Low complexity" evidence="4">
    <location>
        <begin position="112"/>
        <end position="131"/>
    </location>
</feature>
<sequence length="348" mass="36335">MDRRDAMGLSGSGSYYIHRGLSGSGPPTFHGSPQQQQGLRHLPNQNSPFGSGSTGFGSPSLHGDPSLATAAGGAGALPHHIGVNMIAPPPPPSETPMKRKRGRPRKYGQDGSVSLALSSSSVSTITPNNSNKRGRGRPPGSGKKQRMASVGELMPSSSGMSFTPHVIAVSIGEDIASKVIAFSQQGPRAICVLSASGAVSTATLIQPSASPGAIKYEGRFEILALSTSYIVATDGSFRNRTGNLSVSLASPDGRVIGGAIGGPLIAASPVQVIVGSFIWAAPKIKSKKREEEASEVVQETDDHHVLDNNNNTISPVPQQQPNQNLIWSTGSRQMDMRHAHADIDLMRG</sequence>
<reference key="1">
    <citation type="journal article" date="1999" name="Nature">
        <title>Sequence and analysis of chromosome 2 of the plant Arabidopsis thaliana.</title>
        <authorList>
            <person name="Lin X."/>
            <person name="Kaul S."/>
            <person name="Rounsley S.D."/>
            <person name="Shea T.P."/>
            <person name="Benito M.-I."/>
            <person name="Town C.D."/>
            <person name="Fujii C.Y."/>
            <person name="Mason T.M."/>
            <person name="Bowman C.L."/>
            <person name="Barnstead M.E."/>
            <person name="Feldblyum T.V."/>
            <person name="Buell C.R."/>
            <person name="Ketchum K.A."/>
            <person name="Lee J.J."/>
            <person name="Ronning C.M."/>
            <person name="Koo H.L."/>
            <person name="Moffat K.S."/>
            <person name="Cronin L.A."/>
            <person name="Shen M."/>
            <person name="Pai G."/>
            <person name="Van Aken S."/>
            <person name="Umayam L."/>
            <person name="Tallon L.J."/>
            <person name="Gill J.E."/>
            <person name="Adams M.D."/>
            <person name="Carrera A.J."/>
            <person name="Creasy T.H."/>
            <person name="Goodman H.M."/>
            <person name="Somerville C.R."/>
            <person name="Copenhaver G.P."/>
            <person name="Preuss D."/>
            <person name="Nierman W.C."/>
            <person name="White O."/>
            <person name="Eisen J.A."/>
            <person name="Salzberg S.L."/>
            <person name="Fraser C.M."/>
            <person name="Venter J.C."/>
        </authorList>
    </citation>
    <scope>NUCLEOTIDE SEQUENCE [LARGE SCALE GENOMIC DNA]</scope>
    <source>
        <strain>cv. Columbia</strain>
    </source>
</reference>
<reference key="2">
    <citation type="journal article" date="2017" name="Plant J.">
        <title>Araport11: a complete reannotation of the Arabidopsis thaliana reference genome.</title>
        <authorList>
            <person name="Cheng C.Y."/>
            <person name="Krishnakumar V."/>
            <person name="Chan A.P."/>
            <person name="Thibaud-Nissen F."/>
            <person name="Schobel S."/>
            <person name="Town C.D."/>
        </authorList>
    </citation>
    <scope>GENOME REANNOTATION</scope>
    <source>
        <strain>cv. Columbia</strain>
    </source>
</reference>
<reference key="3">
    <citation type="journal article" date="2003" name="Science">
        <title>Empirical analysis of transcriptional activity in the Arabidopsis genome.</title>
        <authorList>
            <person name="Yamada K."/>
            <person name="Lim J."/>
            <person name="Dale J.M."/>
            <person name="Chen H."/>
            <person name="Shinn P."/>
            <person name="Palm C.J."/>
            <person name="Southwick A.M."/>
            <person name="Wu H.C."/>
            <person name="Kim C.J."/>
            <person name="Nguyen M."/>
            <person name="Pham P.K."/>
            <person name="Cheuk R.F."/>
            <person name="Karlin-Newmann G."/>
            <person name="Liu S.X."/>
            <person name="Lam B."/>
            <person name="Sakano H."/>
            <person name="Wu T."/>
            <person name="Yu G."/>
            <person name="Miranda M."/>
            <person name="Quach H.L."/>
            <person name="Tripp M."/>
            <person name="Chang C.H."/>
            <person name="Lee J.M."/>
            <person name="Toriumi M.J."/>
            <person name="Chan M.M."/>
            <person name="Tang C.C."/>
            <person name="Onodera C.S."/>
            <person name="Deng J.M."/>
            <person name="Akiyama K."/>
            <person name="Ansari Y."/>
            <person name="Arakawa T."/>
            <person name="Banh J."/>
            <person name="Banno F."/>
            <person name="Bowser L."/>
            <person name="Brooks S.Y."/>
            <person name="Carninci P."/>
            <person name="Chao Q."/>
            <person name="Choy N."/>
            <person name="Enju A."/>
            <person name="Goldsmith A.D."/>
            <person name="Gurjal M."/>
            <person name="Hansen N.F."/>
            <person name="Hayashizaki Y."/>
            <person name="Johnson-Hopson C."/>
            <person name="Hsuan V.W."/>
            <person name="Iida K."/>
            <person name="Karnes M."/>
            <person name="Khan S."/>
            <person name="Koesema E."/>
            <person name="Ishida J."/>
            <person name="Jiang P.X."/>
            <person name="Jones T."/>
            <person name="Kawai J."/>
            <person name="Kamiya A."/>
            <person name="Meyers C."/>
            <person name="Nakajima M."/>
            <person name="Narusaka M."/>
            <person name="Seki M."/>
            <person name="Sakurai T."/>
            <person name="Satou M."/>
            <person name="Tamse R."/>
            <person name="Vaysberg M."/>
            <person name="Wallender E.K."/>
            <person name="Wong C."/>
            <person name="Yamamura Y."/>
            <person name="Yuan S."/>
            <person name="Shinozaki K."/>
            <person name="Davis R.W."/>
            <person name="Theologis A."/>
            <person name="Ecker J.R."/>
        </authorList>
    </citation>
    <scope>NUCLEOTIDE SEQUENCE [LARGE SCALE MRNA]</scope>
    <source>
        <strain>cv. Columbia</strain>
    </source>
</reference>
<reference key="4">
    <citation type="journal article" date="2004" name="Plant Mol. Biol.">
        <title>Identification of a novel plant MAR DNA binding protein localized on chromosomal surfaces.</title>
        <authorList>
            <person name="Fujimoto S."/>
            <person name="Matsunaga S."/>
            <person name="Yonemura M."/>
            <person name="Uchiyama S."/>
            <person name="Azuma T."/>
            <person name="Fukui K."/>
        </authorList>
    </citation>
    <scope>IDENTIFICATION</scope>
    <scope>GENE FAMILY</scope>
    <scope>NOMENCLATURE</scope>
    <source>
        <strain>cv. Columbia</strain>
    </source>
</reference>
<reference key="5">
    <citation type="journal article" date="2013" name="Proc. Natl. Acad. Sci. U.S.A.">
        <title>Arabidopsis thaliana AHL family modulates hypocotyl growth redundantly by interacting with each other via the PPC/DUF296 domain.</title>
        <authorList>
            <person name="Zhao J."/>
            <person name="Favero D.S."/>
            <person name="Peng H."/>
            <person name="Neff M.M."/>
        </authorList>
    </citation>
    <scope>GENE FAMILY</scope>
    <scope>DOMAIN PPC</scope>
</reference>
<gene>
    <name evidence="6" type="primary">AHL9</name>
    <name evidence="8" type="ordered locus">At2g45850</name>
    <name evidence="9" type="ORF">F4I18.17</name>
</gene>
<name>AHL9_ARATH</name>
<accession>O80834</accession>
<proteinExistence type="evidence at transcript level"/>
<organism>
    <name type="scientific">Arabidopsis thaliana</name>
    <name type="common">Mouse-ear cress</name>
    <dbReference type="NCBI Taxonomy" id="3702"/>
    <lineage>
        <taxon>Eukaryota</taxon>
        <taxon>Viridiplantae</taxon>
        <taxon>Streptophyta</taxon>
        <taxon>Embryophyta</taxon>
        <taxon>Tracheophyta</taxon>
        <taxon>Spermatophyta</taxon>
        <taxon>Magnoliopsida</taxon>
        <taxon>eudicotyledons</taxon>
        <taxon>Gunneridae</taxon>
        <taxon>Pentapetalae</taxon>
        <taxon>rosids</taxon>
        <taxon>malvids</taxon>
        <taxon>Brassicales</taxon>
        <taxon>Brassicaceae</taxon>
        <taxon>Camelineae</taxon>
        <taxon>Arabidopsis</taxon>
    </lineage>
</organism>